<organism>
    <name type="scientific">Saccharophagus degradans (strain 2-40 / ATCC 43961 / DSM 17024)</name>
    <dbReference type="NCBI Taxonomy" id="203122"/>
    <lineage>
        <taxon>Bacteria</taxon>
        <taxon>Pseudomonadati</taxon>
        <taxon>Pseudomonadota</taxon>
        <taxon>Gammaproteobacteria</taxon>
        <taxon>Cellvibrionales</taxon>
        <taxon>Cellvibrionaceae</taxon>
        <taxon>Saccharophagus</taxon>
    </lineage>
</organism>
<feature type="chain" id="PRO_0000258527" description="Chaperone protein HtpG">
    <location>
        <begin position="1"/>
        <end position="635"/>
    </location>
</feature>
<feature type="region of interest" description="A; substrate-binding" evidence="1">
    <location>
        <begin position="1"/>
        <end position="343"/>
    </location>
</feature>
<feature type="region of interest" description="B" evidence="1">
    <location>
        <begin position="344"/>
        <end position="560"/>
    </location>
</feature>
<feature type="region of interest" description="C" evidence="1">
    <location>
        <begin position="561"/>
        <end position="635"/>
    </location>
</feature>
<accession>Q21IX0</accession>
<evidence type="ECO:0000255" key="1">
    <source>
        <dbReference type="HAMAP-Rule" id="MF_00505"/>
    </source>
</evidence>
<sequence>MTAEATVETRGFETEAKQLLHLMIHSLYSNKEIFLRELVSNASDAADKLRFEALKQPELLEQDSELKITIDFDKEAKTLSITDNGIGMNRDEVIANLGTIARSGTAQFMANLSGDQKKDSQLIGQFGVGFYSAFIVADKVEVLTRRAGSEPSEGVRWVSEGEAEYSIENIEKAARGTTIILHLKKDQEEFADGWRLRSIIKKYSDHISLPVEMPKEAAPGEDKEEKAEVEYEVINTAKALWARSRSDVTDEEYKEFYKHVSHDYTDPLSWSHNRVEGKLDYTSLIYIPSKAPFDMYNREKPRGVKLYVQRTFIMDDAEQFLPLYLRFIKGVVDSNDLSLNVSREILQQDPNIDSMRSALTKRVLDMLEKMAKKEPEKYATFWKEFGEVLKEGPAEDFANKEKIAKLLRFATTHKNTNEQDQSLDAYIERMKEGQDKIYYVVAENFNTAKNSPHLEVFRKKGIEVLLLSNRIDDWLMGHLMEYDGKQFQDVGKGSLDLGKLDSEEDKKEQEKVEEAMAPFVERMKAALAEQVEEVRITHRLTESPACLVVGEHDMGAQMRRLLEAAGQAVPESKPIIEINPTHPLVQKLDQEQDEDRFKDLSHILFDQASLAEGGSLKDPAAYVSRLNKLLLELSN</sequence>
<reference key="1">
    <citation type="journal article" date="2008" name="PLoS Genet.">
        <title>Complete genome sequence of the complex carbohydrate-degrading marine bacterium, Saccharophagus degradans strain 2-40 T.</title>
        <authorList>
            <person name="Weiner R.M."/>
            <person name="Taylor L.E. II"/>
            <person name="Henrissat B."/>
            <person name="Hauser L."/>
            <person name="Land M."/>
            <person name="Coutinho P.M."/>
            <person name="Rancurel C."/>
            <person name="Saunders E.H."/>
            <person name="Longmire A.G."/>
            <person name="Zhang H."/>
            <person name="Bayer E.A."/>
            <person name="Gilbert H.J."/>
            <person name="Larimer F."/>
            <person name="Zhulin I.B."/>
            <person name="Ekborg N.A."/>
            <person name="Lamed R."/>
            <person name="Richardson P.M."/>
            <person name="Borovok I."/>
            <person name="Hutcheson S."/>
        </authorList>
    </citation>
    <scope>NUCLEOTIDE SEQUENCE [LARGE SCALE GENOMIC DNA]</scope>
    <source>
        <strain>2-40 / ATCC 43961 / DSM 17024</strain>
    </source>
</reference>
<protein>
    <recommendedName>
        <fullName evidence="1">Chaperone protein HtpG</fullName>
    </recommendedName>
    <alternativeName>
        <fullName evidence="1">Heat shock protein HtpG</fullName>
    </alternativeName>
    <alternativeName>
        <fullName evidence="1">High temperature protein G</fullName>
    </alternativeName>
</protein>
<keyword id="KW-0067">ATP-binding</keyword>
<keyword id="KW-0143">Chaperone</keyword>
<keyword id="KW-0963">Cytoplasm</keyword>
<keyword id="KW-0547">Nucleotide-binding</keyword>
<keyword id="KW-1185">Reference proteome</keyword>
<keyword id="KW-0346">Stress response</keyword>
<proteinExistence type="inferred from homology"/>
<dbReference type="EMBL" id="CP000282">
    <property type="protein sequence ID" value="ABD81359.1"/>
    <property type="molecule type" value="Genomic_DNA"/>
</dbReference>
<dbReference type="RefSeq" id="WP_011468577.1">
    <property type="nucleotide sequence ID" value="NC_007912.1"/>
</dbReference>
<dbReference type="SMR" id="Q21IX0"/>
<dbReference type="STRING" id="203122.Sde_2099"/>
<dbReference type="GeneID" id="98613771"/>
<dbReference type="KEGG" id="sde:Sde_2099"/>
<dbReference type="eggNOG" id="COG0326">
    <property type="taxonomic scope" value="Bacteria"/>
</dbReference>
<dbReference type="HOGENOM" id="CLU_006684_3_0_6"/>
<dbReference type="OrthoDB" id="9802640at2"/>
<dbReference type="Proteomes" id="UP000001947">
    <property type="component" value="Chromosome"/>
</dbReference>
<dbReference type="GO" id="GO:0005737">
    <property type="term" value="C:cytoplasm"/>
    <property type="evidence" value="ECO:0007669"/>
    <property type="project" value="UniProtKB-SubCell"/>
</dbReference>
<dbReference type="GO" id="GO:0005524">
    <property type="term" value="F:ATP binding"/>
    <property type="evidence" value="ECO:0007669"/>
    <property type="project" value="UniProtKB-UniRule"/>
</dbReference>
<dbReference type="GO" id="GO:0016887">
    <property type="term" value="F:ATP hydrolysis activity"/>
    <property type="evidence" value="ECO:0007669"/>
    <property type="project" value="InterPro"/>
</dbReference>
<dbReference type="GO" id="GO:0140662">
    <property type="term" value="F:ATP-dependent protein folding chaperone"/>
    <property type="evidence" value="ECO:0007669"/>
    <property type="project" value="InterPro"/>
</dbReference>
<dbReference type="GO" id="GO:0051082">
    <property type="term" value="F:unfolded protein binding"/>
    <property type="evidence" value="ECO:0007669"/>
    <property type="project" value="UniProtKB-UniRule"/>
</dbReference>
<dbReference type="CDD" id="cd16927">
    <property type="entry name" value="HATPase_Hsp90-like"/>
    <property type="match status" value="1"/>
</dbReference>
<dbReference type="FunFam" id="3.30.230.80:FF:000002">
    <property type="entry name" value="Molecular chaperone HtpG"/>
    <property type="match status" value="1"/>
</dbReference>
<dbReference type="FunFam" id="3.30.565.10:FF:000009">
    <property type="entry name" value="Molecular chaperone HtpG"/>
    <property type="match status" value="1"/>
</dbReference>
<dbReference type="Gene3D" id="3.30.230.80">
    <property type="match status" value="1"/>
</dbReference>
<dbReference type="Gene3D" id="3.40.50.11260">
    <property type="match status" value="1"/>
</dbReference>
<dbReference type="Gene3D" id="1.20.120.790">
    <property type="entry name" value="Heat shock protein 90, C-terminal domain"/>
    <property type="match status" value="1"/>
</dbReference>
<dbReference type="Gene3D" id="3.30.565.10">
    <property type="entry name" value="Histidine kinase-like ATPase, C-terminal domain"/>
    <property type="match status" value="1"/>
</dbReference>
<dbReference type="HAMAP" id="MF_00505">
    <property type="entry name" value="HSP90"/>
    <property type="match status" value="1"/>
</dbReference>
<dbReference type="InterPro" id="IPR036890">
    <property type="entry name" value="HATPase_C_sf"/>
</dbReference>
<dbReference type="InterPro" id="IPR019805">
    <property type="entry name" value="Heat_shock_protein_90_CS"/>
</dbReference>
<dbReference type="InterPro" id="IPR037196">
    <property type="entry name" value="HSP90_C"/>
</dbReference>
<dbReference type="InterPro" id="IPR001404">
    <property type="entry name" value="Hsp90_fam"/>
</dbReference>
<dbReference type="InterPro" id="IPR020575">
    <property type="entry name" value="Hsp90_N"/>
</dbReference>
<dbReference type="InterPro" id="IPR020568">
    <property type="entry name" value="Ribosomal_Su5_D2-typ_SF"/>
</dbReference>
<dbReference type="NCBIfam" id="NF003555">
    <property type="entry name" value="PRK05218.1"/>
    <property type="match status" value="1"/>
</dbReference>
<dbReference type="PANTHER" id="PTHR11528">
    <property type="entry name" value="HEAT SHOCK PROTEIN 90 FAMILY MEMBER"/>
    <property type="match status" value="1"/>
</dbReference>
<dbReference type="Pfam" id="PF13589">
    <property type="entry name" value="HATPase_c_3"/>
    <property type="match status" value="1"/>
</dbReference>
<dbReference type="Pfam" id="PF00183">
    <property type="entry name" value="HSP90"/>
    <property type="match status" value="1"/>
</dbReference>
<dbReference type="PIRSF" id="PIRSF002583">
    <property type="entry name" value="Hsp90"/>
    <property type="match status" value="1"/>
</dbReference>
<dbReference type="PRINTS" id="PR00775">
    <property type="entry name" value="HEATSHOCK90"/>
</dbReference>
<dbReference type="SMART" id="SM00387">
    <property type="entry name" value="HATPase_c"/>
    <property type="match status" value="1"/>
</dbReference>
<dbReference type="SUPFAM" id="SSF55874">
    <property type="entry name" value="ATPase domain of HSP90 chaperone/DNA topoisomerase II/histidine kinase"/>
    <property type="match status" value="1"/>
</dbReference>
<dbReference type="SUPFAM" id="SSF110942">
    <property type="entry name" value="HSP90 C-terminal domain"/>
    <property type="match status" value="1"/>
</dbReference>
<dbReference type="SUPFAM" id="SSF54211">
    <property type="entry name" value="Ribosomal protein S5 domain 2-like"/>
    <property type="match status" value="1"/>
</dbReference>
<dbReference type="PROSITE" id="PS00298">
    <property type="entry name" value="HSP90"/>
    <property type="match status" value="1"/>
</dbReference>
<gene>
    <name evidence="1" type="primary">htpG</name>
    <name type="ordered locus">Sde_2099</name>
</gene>
<comment type="function">
    <text evidence="1">Molecular chaperone. Has ATPase activity.</text>
</comment>
<comment type="subunit">
    <text evidence="1">Homodimer.</text>
</comment>
<comment type="subcellular location">
    <subcellularLocation>
        <location evidence="1">Cytoplasm</location>
    </subcellularLocation>
</comment>
<comment type="similarity">
    <text evidence="1">Belongs to the heat shock protein 90 family.</text>
</comment>
<name>HTPG_SACD2</name>